<protein>
    <recommendedName>
        <fullName>Polymerase basic protein 2</fullName>
    </recommendedName>
    <alternativeName>
        <fullName>RNA-directed RNA polymerase subunit P3</fullName>
    </alternativeName>
</protein>
<keyword id="KW-1157">Cap snatching</keyword>
<keyword id="KW-1262">Eukaryotic host gene expression shutoff by virus</keyword>
<keyword id="KW-1191">Eukaryotic host transcription shutoff by virus</keyword>
<keyword id="KW-1190">Host gene expression shutoff by virus</keyword>
<keyword id="KW-1045">Host mitochondrion</keyword>
<keyword id="KW-1048">Host nucleus</keyword>
<keyword id="KW-0945">Host-virus interaction</keyword>
<keyword id="KW-1090">Inhibition of host innate immune response by virus</keyword>
<keyword id="KW-1097">Inhibition of host MAVS by virus</keyword>
<keyword id="KW-1113">Inhibition of host RLR pathway by virus</keyword>
<keyword id="KW-1104">Inhibition of host RNA polymerase II by virus</keyword>
<keyword id="KW-0506">mRNA capping</keyword>
<keyword id="KW-0507">mRNA processing</keyword>
<keyword id="KW-0899">Viral immunoevasion</keyword>
<keyword id="KW-1195">Viral transcription</keyword>
<keyword id="KW-0946">Virion</keyword>
<reference key="1">
    <citation type="journal article" date="2004" name="Nature">
        <title>Genesis of a highly pathogenic and potentially pandemic H5N1 influenza virus in eastern Asia.</title>
        <authorList>
            <person name="Li K.S."/>
            <person name="Guan Y."/>
            <person name="Wang J."/>
            <person name="Smith G.J.D."/>
            <person name="Xu K.M."/>
            <person name="Duan L."/>
            <person name="Rahardjo A.P."/>
            <person name="Puthavathana P."/>
            <person name="Buranathai C."/>
            <person name="Nguyen T.D."/>
            <person name="Estoepangestie A.T.S."/>
            <person name="Chaisingh A."/>
            <person name="Auewarakul P."/>
            <person name="Long H.T."/>
            <person name="Hanh N.T.H."/>
            <person name="Webby R.J."/>
            <person name="Poon L.L.M."/>
            <person name="Chen H."/>
            <person name="Shortridge K.F."/>
            <person name="Yuen K.Y."/>
            <person name="Webster R.G."/>
            <person name="Peiris J.S.M."/>
        </authorList>
    </citation>
    <scope>NUCLEOTIDE SEQUENCE [GENOMIC RNA]</scope>
</reference>
<feature type="chain" id="PRO_0000311148" description="Polymerase basic protein 2">
    <location>
        <begin position="1" status="less than"/>
        <end position="736" status="greater than"/>
    </location>
</feature>
<feature type="short sequence motif" description="Nuclear localization signal" evidence="1">
    <location>
        <begin position="728"/>
        <end position="731"/>
    </location>
</feature>
<feature type="non-terminal residue">
    <location>
        <position position="1"/>
    </location>
</feature>
<feature type="non-terminal residue">
    <location>
        <position position="736"/>
    </location>
</feature>
<accession>Q6DNM2</accession>
<organismHost>
    <name type="scientific">Aves</name>
    <dbReference type="NCBI Taxonomy" id="8782"/>
</organismHost>
<organismHost>
    <name type="scientific">Felis catus</name>
    <name type="common">Cat</name>
    <name type="synonym">Felis silvestris catus</name>
    <dbReference type="NCBI Taxonomy" id="9685"/>
</organismHost>
<organismHost>
    <name type="scientific">Homo sapiens</name>
    <name type="common">Human</name>
    <dbReference type="NCBI Taxonomy" id="9606"/>
</organismHost>
<organismHost>
    <name type="scientific">Panthera pardus</name>
    <name type="common">Leopard</name>
    <name type="synonym">Felis pardus</name>
    <dbReference type="NCBI Taxonomy" id="9691"/>
</organismHost>
<organismHost>
    <name type="scientific">Panthera tigris</name>
    <name type="common">Tiger</name>
    <dbReference type="NCBI Taxonomy" id="9694"/>
</organismHost>
<organismHost>
    <name type="scientific">Sus scrofa</name>
    <name type="common">Pig</name>
    <dbReference type="NCBI Taxonomy" id="9823"/>
</organismHost>
<organism>
    <name type="scientific">Influenza A virus (strain A/Guinea fowl/Hong Kong/38/2002 H5N1 genotype X0)</name>
    <dbReference type="NCBI Taxonomy" id="284208"/>
    <lineage>
        <taxon>Viruses</taxon>
        <taxon>Riboviria</taxon>
        <taxon>Orthornavirae</taxon>
        <taxon>Negarnaviricota</taxon>
        <taxon>Polyploviricotina</taxon>
        <taxon>Insthoviricetes</taxon>
        <taxon>Articulavirales</taxon>
        <taxon>Orthomyxoviridae</taxon>
        <taxon>Alphainfluenzavirus</taxon>
        <taxon>Alphainfluenzavirus influenzae</taxon>
        <taxon>Influenza A virus</taxon>
    </lineage>
</organism>
<evidence type="ECO:0000250" key="1"/>
<evidence type="ECO:0000250" key="2">
    <source>
        <dbReference type="UniProtKB" id="P03428"/>
    </source>
</evidence>
<evidence type="ECO:0000305" key="3"/>
<proteinExistence type="inferred from homology"/>
<name>PB2_I02A1</name>
<sequence length="736" mass="83280">NLMSQPRTREILTKTTVDHMAIIKKYTSGRQEKNPALRMKWMMAMKYPITADKRIMEMIPERNEQGQTLWSKTNDAGSDRVMVSSLAVTWWNRNGPTTSTIHYPKVYKTYFEKVERLKHGTFGPVHFRNQVKIRRRVDVNPGHADLSAKEAQDVIMEVVFPNEVGARILTSESQLDNNKREEEELQDCKIAPLMVAYMLERELVRKTRFLPVAGGTSSVYIEVLHLTQGTCWEQMYTPGGEVRNDDVDQSLIIAARNIVRRATVSADPLASLLEMCHSTQIGGIRMVDILRQNPTEEQAVDICKAAMGLRISSSFSFGGFTFKRTSGSSVKKEEEVLTGNLQTLKIRVHEGYEEFTMVGRRATAILRKATRRLIQLIVSGRDEQSIAEAIIVAMVFSQEDCMIKAVRGDLNFVNRANQRLNPMHQLLRHFQKDAKVLFQNWGIELIDNVMGMIGILPDMTPSTEMSLRGVRVSKMGVDEYSSTERVVVSIDRFLRVRDQRGNVLLSPEEVSETQGTEKLTITYSSSMMWEINGPESVLVNTYQWIIRNWETVKIQWSQDPTMLYNKMEFEPFQSLIPKAVRGQYSGFVRTLFQQMRDVLGTFDTVQIIKLLPFTAAPPEQSRMQFSSLTVNVRGSGMRILVRGNSPVFNYNKATKRLTVLGKDAGALTEDPDEGTAGVESAVLRGFLILGKEDKRYGPALSINELSNLAKGEKANVLIGQGDVVLVMKRKRDSSIL</sequence>
<comment type="function">
    <text evidence="2">Plays an essential role in transcription initiation and cap-stealing mechanism, in which cellular capped pre-mRNAs are used to generate primers for viral transcription. Binds the cap of the target pre-RNA which is subsequently cleaved after 10-13 nucleotides by PA. Plays a role in the initiation of the viral genome replication and modulates the activity of the ribonucleoprotein (RNP) complex. In addition, participates in the inhibition of type I interferon induction through interaction with the host mitochondrial antiviral signaling protein MAVS.</text>
</comment>
<comment type="subunit">
    <text evidence="2">Influenza RNA polymerase is composed of three subunits: PB1, PB2 and PA. Interacts (via N-terminus) with PB1 (via C-terminus). Interacts with nucleoprotein NP (via N-terminus). Interacts (via N-terminus) with host MAVS (via N-terminus); this interaction inhibits host innate immune response.</text>
</comment>
<comment type="subcellular location">
    <subcellularLocation>
        <location>Virion</location>
    </subcellularLocation>
    <subcellularLocation>
        <location evidence="2">Host nucleus</location>
    </subcellularLocation>
    <subcellularLocation>
        <location evidence="2">Host mitochondrion</location>
    </subcellularLocation>
</comment>
<comment type="similarity">
    <text evidence="3">Belongs to the influenza viruses PB2 family.</text>
</comment>
<dbReference type="EMBL" id="AY651730">
    <property type="protein sequence ID" value="AAT73561.1"/>
    <property type="molecule type" value="Genomic_RNA"/>
</dbReference>
<dbReference type="SMR" id="Q6DNM2"/>
<dbReference type="GO" id="GO:0033650">
    <property type="term" value="C:host cell mitochondrion"/>
    <property type="evidence" value="ECO:0007669"/>
    <property type="project" value="UniProtKB-SubCell"/>
</dbReference>
<dbReference type="GO" id="GO:0042025">
    <property type="term" value="C:host cell nucleus"/>
    <property type="evidence" value="ECO:0007669"/>
    <property type="project" value="UniProtKB-SubCell"/>
</dbReference>
<dbReference type="GO" id="GO:0044423">
    <property type="term" value="C:virion component"/>
    <property type="evidence" value="ECO:0007669"/>
    <property type="project" value="UniProtKB-KW"/>
</dbReference>
<dbReference type="GO" id="GO:0003723">
    <property type="term" value="F:RNA binding"/>
    <property type="evidence" value="ECO:0007669"/>
    <property type="project" value="InterPro"/>
</dbReference>
<dbReference type="GO" id="GO:0006370">
    <property type="term" value="P:7-methylguanosine mRNA capping"/>
    <property type="evidence" value="ECO:0007669"/>
    <property type="project" value="UniProtKB-KW"/>
</dbReference>
<dbReference type="GO" id="GO:0075526">
    <property type="term" value="P:cap snatching"/>
    <property type="evidence" value="ECO:0007669"/>
    <property type="project" value="UniProtKB-KW"/>
</dbReference>
<dbReference type="GO" id="GO:0006351">
    <property type="term" value="P:DNA-templated transcription"/>
    <property type="evidence" value="ECO:0007669"/>
    <property type="project" value="InterPro"/>
</dbReference>
<dbReference type="GO" id="GO:0039545">
    <property type="term" value="P:symbiont-mediated suppression of host cytoplasmic pattern recognition receptor signaling pathway via inhibition of MAVS activity"/>
    <property type="evidence" value="ECO:0007669"/>
    <property type="project" value="UniProtKB-KW"/>
</dbReference>
<dbReference type="GO" id="GO:0039657">
    <property type="term" value="P:symbiont-mediated suppression of host gene expression"/>
    <property type="evidence" value="ECO:0007669"/>
    <property type="project" value="UniProtKB-KW"/>
</dbReference>
<dbReference type="GO" id="GO:0039523">
    <property type="term" value="P:symbiont-mediated suppression of host mRNA transcription via inhibition of RNA polymerase II activity"/>
    <property type="evidence" value="ECO:0007669"/>
    <property type="project" value="UniProtKB-KW"/>
</dbReference>
<dbReference type="Gene3D" id="3.30.30.90">
    <property type="entry name" value="Polymerase Basic Protein 2, C-terminal domain"/>
    <property type="match status" value="1"/>
</dbReference>
<dbReference type="InterPro" id="IPR049110">
    <property type="entry name" value="Flu_PB2_2nd"/>
</dbReference>
<dbReference type="InterPro" id="IPR049114">
    <property type="entry name" value="Flu_PB2_6th"/>
</dbReference>
<dbReference type="InterPro" id="IPR049115">
    <property type="entry name" value="Flu_PB2_C"/>
</dbReference>
<dbReference type="InterPro" id="IPR048298">
    <property type="entry name" value="Flu_PB2_CAP-bd"/>
</dbReference>
<dbReference type="InterPro" id="IPR049111">
    <property type="entry name" value="Flu_PB2_middle"/>
</dbReference>
<dbReference type="InterPro" id="IPR049106">
    <property type="entry name" value="Flu_PB2_N"/>
</dbReference>
<dbReference type="InterPro" id="IPR049113">
    <property type="entry name" value="PB2_helical"/>
</dbReference>
<dbReference type="InterPro" id="IPR037258">
    <property type="entry name" value="PDB2_C"/>
</dbReference>
<dbReference type="Pfam" id="PF20947">
    <property type="entry name" value="Flu_PB2_1st"/>
    <property type="match status" value="1"/>
</dbReference>
<dbReference type="Pfam" id="PF20948">
    <property type="entry name" value="Flu_PB2_2nd"/>
    <property type="match status" value="1"/>
</dbReference>
<dbReference type="Pfam" id="PF20949">
    <property type="entry name" value="Flu_PB2_3rd"/>
    <property type="match status" value="1"/>
</dbReference>
<dbReference type="Pfam" id="PF20950">
    <property type="entry name" value="Flu_PB2_4th"/>
    <property type="match status" value="1"/>
</dbReference>
<dbReference type="Pfam" id="PF00604">
    <property type="entry name" value="Flu_PB2_5th"/>
    <property type="match status" value="1"/>
</dbReference>
<dbReference type="Pfam" id="PF20951">
    <property type="entry name" value="Flu_PB2_6th"/>
    <property type="match status" value="1"/>
</dbReference>
<dbReference type="Pfam" id="PF20952">
    <property type="entry name" value="Flu_PB2_7th"/>
    <property type="match status" value="1"/>
</dbReference>
<dbReference type="SUPFAM" id="SSF160453">
    <property type="entry name" value="PB2 C-terminal domain-like"/>
    <property type="match status" value="1"/>
</dbReference>
<gene>
    <name type="primary">PB2</name>
</gene>